<proteinExistence type="inferred from homology"/>
<feature type="chain" id="PRO_0000264382" description="UDP-3-O-acylglucosamine N-acyltransferase">
    <location>
        <begin position="1"/>
        <end position="348"/>
    </location>
</feature>
<feature type="active site" description="Proton acceptor" evidence="1">
    <location>
        <position position="243"/>
    </location>
</feature>
<name>LPXD_HAHCH</name>
<comment type="function">
    <text evidence="1">Catalyzes the N-acylation of UDP-3-O-acylglucosamine using 3-hydroxyacyl-ACP as the acyl donor. Is involved in the biosynthesis of lipid A, a phosphorylated glycolipid that anchors the lipopolysaccharide to the outer membrane of the cell.</text>
</comment>
<comment type="catalytic activity">
    <reaction evidence="1">
        <text>a UDP-3-O-[(3R)-3-hydroxyacyl]-alpha-D-glucosamine + a (3R)-hydroxyacyl-[ACP] = a UDP-2-N,3-O-bis[(3R)-3-hydroxyacyl]-alpha-D-glucosamine + holo-[ACP] + H(+)</text>
        <dbReference type="Rhea" id="RHEA:53836"/>
        <dbReference type="Rhea" id="RHEA-COMP:9685"/>
        <dbReference type="Rhea" id="RHEA-COMP:9945"/>
        <dbReference type="ChEBI" id="CHEBI:15378"/>
        <dbReference type="ChEBI" id="CHEBI:64479"/>
        <dbReference type="ChEBI" id="CHEBI:78827"/>
        <dbReference type="ChEBI" id="CHEBI:137740"/>
        <dbReference type="ChEBI" id="CHEBI:137748"/>
        <dbReference type="EC" id="2.3.1.191"/>
    </reaction>
</comment>
<comment type="pathway">
    <text evidence="1">Bacterial outer membrane biogenesis; LPS lipid A biosynthesis.</text>
</comment>
<comment type="subunit">
    <text evidence="1">Homotrimer.</text>
</comment>
<comment type="similarity">
    <text evidence="1">Belongs to the transferase hexapeptide repeat family. LpxD subfamily.</text>
</comment>
<gene>
    <name evidence="1" type="primary">lpxD</name>
    <name type="ordered locus">HCH_05241</name>
</gene>
<sequence>MGKTDLSYTLADIAFRIGAELRGDGSVEVKGLATLQKAQAGQISFLANKNYLKHLKDTCASAVIIPSSFADQCSTNVLVMENSYFGYALCSQLFSPQWWSMSGISPSAAISESAKLGAGVTIGANVVIEEDAEIGEGAVIGPGCYIGAGSIIGAKTQLRPNVTVYHGVNIGARALIHSGAVIGSDGFGFAPNKGDWAKIAQLGGVVIGDDVEIGANTTIDRGALDDTVIETGAKLDNQIQIAHNVKVGAYTVIAACVGVSGSSSIGKHCMIGGGVGIAGHLEITDQVQITGMTLVTHNIKEPGVYSSGTAVEPNASWRKNVARFRQLDQLARRVRVLEQGGRRKSDAD</sequence>
<organism>
    <name type="scientific">Hahella chejuensis (strain KCTC 2396)</name>
    <dbReference type="NCBI Taxonomy" id="349521"/>
    <lineage>
        <taxon>Bacteria</taxon>
        <taxon>Pseudomonadati</taxon>
        <taxon>Pseudomonadota</taxon>
        <taxon>Gammaproteobacteria</taxon>
        <taxon>Oceanospirillales</taxon>
        <taxon>Hahellaceae</taxon>
        <taxon>Hahella</taxon>
    </lineage>
</organism>
<accession>Q2SBQ8</accession>
<keyword id="KW-0012">Acyltransferase</keyword>
<keyword id="KW-0441">Lipid A biosynthesis</keyword>
<keyword id="KW-0444">Lipid biosynthesis</keyword>
<keyword id="KW-0443">Lipid metabolism</keyword>
<keyword id="KW-1185">Reference proteome</keyword>
<keyword id="KW-0677">Repeat</keyword>
<keyword id="KW-0808">Transferase</keyword>
<evidence type="ECO:0000255" key="1">
    <source>
        <dbReference type="HAMAP-Rule" id="MF_00523"/>
    </source>
</evidence>
<dbReference type="EC" id="2.3.1.191" evidence="1"/>
<dbReference type="EMBL" id="CP000155">
    <property type="protein sequence ID" value="ABC31916.1"/>
    <property type="molecule type" value="Genomic_DNA"/>
</dbReference>
<dbReference type="RefSeq" id="WP_011398980.1">
    <property type="nucleotide sequence ID" value="NC_007645.1"/>
</dbReference>
<dbReference type="SMR" id="Q2SBQ8"/>
<dbReference type="STRING" id="349521.HCH_05241"/>
<dbReference type="KEGG" id="hch:HCH_05241"/>
<dbReference type="eggNOG" id="COG1044">
    <property type="taxonomic scope" value="Bacteria"/>
</dbReference>
<dbReference type="HOGENOM" id="CLU_049865_0_1_6"/>
<dbReference type="OrthoDB" id="9784739at2"/>
<dbReference type="UniPathway" id="UPA00973"/>
<dbReference type="Proteomes" id="UP000000238">
    <property type="component" value="Chromosome"/>
</dbReference>
<dbReference type="GO" id="GO:0016020">
    <property type="term" value="C:membrane"/>
    <property type="evidence" value="ECO:0007669"/>
    <property type="project" value="GOC"/>
</dbReference>
<dbReference type="GO" id="GO:0016410">
    <property type="term" value="F:N-acyltransferase activity"/>
    <property type="evidence" value="ECO:0007669"/>
    <property type="project" value="InterPro"/>
</dbReference>
<dbReference type="GO" id="GO:0009245">
    <property type="term" value="P:lipid A biosynthetic process"/>
    <property type="evidence" value="ECO:0007669"/>
    <property type="project" value="UniProtKB-UniRule"/>
</dbReference>
<dbReference type="CDD" id="cd03352">
    <property type="entry name" value="LbH_LpxD"/>
    <property type="match status" value="1"/>
</dbReference>
<dbReference type="Gene3D" id="1.20.5.170">
    <property type="match status" value="1"/>
</dbReference>
<dbReference type="Gene3D" id="2.160.10.10">
    <property type="entry name" value="Hexapeptide repeat proteins"/>
    <property type="match status" value="1"/>
</dbReference>
<dbReference type="Gene3D" id="3.40.1390.10">
    <property type="entry name" value="MurE/MurF, N-terminal domain"/>
    <property type="match status" value="1"/>
</dbReference>
<dbReference type="HAMAP" id="MF_00523">
    <property type="entry name" value="LpxD"/>
    <property type="match status" value="1"/>
</dbReference>
<dbReference type="InterPro" id="IPR001451">
    <property type="entry name" value="Hexapep"/>
</dbReference>
<dbReference type="InterPro" id="IPR018357">
    <property type="entry name" value="Hexapep_transf_CS"/>
</dbReference>
<dbReference type="InterPro" id="IPR007691">
    <property type="entry name" value="LpxD"/>
</dbReference>
<dbReference type="InterPro" id="IPR011004">
    <property type="entry name" value="Trimer_LpxA-like_sf"/>
</dbReference>
<dbReference type="InterPro" id="IPR020573">
    <property type="entry name" value="UDP_GlcNAc_AcTrfase_non-rep"/>
</dbReference>
<dbReference type="NCBIfam" id="TIGR01853">
    <property type="entry name" value="lipid_A_lpxD"/>
    <property type="match status" value="1"/>
</dbReference>
<dbReference type="NCBIfam" id="NF002060">
    <property type="entry name" value="PRK00892.1"/>
    <property type="match status" value="1"/>
</dbReference>
<dbReference type="PANTHER" id="PTHR43378">
    <property type="entry name" value="UDP-3-O-ACYLGLUCOSAMINE N-ACYLTRANSFERASE"/>
    <property type="match status" value="1"/>
</dbReference>
<dbReference type="PANTHER" id="PTHR43378:SF2">
    <property type="entry name" value="UDP-3-O-ACYLGLUCOSAMINE N-ACYLTRANSFERASE 1, MITOCHONDRIAL-RELATED"/>
    <property type="match status" value="1"/>
</dbReference>
<dbReference type="Pfam" id="PF00132">
    <property type="entry name" value="Hexapep"/>
    <property type="match status" value="2"/>
</dbReference>
<dbReference type="Pfam" id="PF04613">
    <property type="entry name" value="LpxD"/>
    <property type="match status" value="1"/>
</dbReference>
<dbReference type="SUPFAM" id="SSF51161">
    <property type="entry name" value="Trimeric LpxA-like enzymes"/>
    <property type="match status" value="1"/>
</dbReference>
<dbReference type="PROSITE" id="PS00101">
    <property type="entry name" value="HEXAPEP_TRANSFERASES"/>
    <property type="match status" value="2"/>
</dbReference>
<protein>
    <recommendedName>
        <fullName evidence="1">UDP-3-O-acylglucosamine N-acyltransferase</fullName>
        <ecNumber evidence="1">2.3.1.191</ecNumber>
    </recommendedName>
</protein>
<reference key="1">
    <citation type="journal article" date="2005" name="Nucleic Acids Res.">
        <title>Genomic blueprint of Hahella chejuensis, a marine microbe producing an algicidal agent.</title>
        <authorList>
            <person name="Jeong H."/>
            <person name="Yim J.H."/>
            <person name="Lee C."/>
            <person name="Choi S.-H."/>
            <person name="Park Y.K."/>
            <person name="Yoon S.H."/>
            <person name="Hur C.-G."/>
            <person name="Kang H.-Y."/>
            <person name="Kim D."/>
            <person name="Lee H.H."/>
            <person name="Park K.H."/>
            <person name="Park S.-H."/>
            <person name="Park H.-S."/>
            <person name="Lee H.K."/>
            <person name="Oh T.K."/>
            <person name="Kim J.F."/>
        </authorList>
    </citation>
    <scope>NUCLEOTIDE SEQUENCE [LARGE SCALE GENOMIC DNA]</scope>
    <source>
        <strain>KCTC 2396</strain>
    </source>
</reference>